<gene>
    <name evidence="1" type="primary">rpmG1</name>
    <name type="ordered locus">LEUM_0266</name>
</gene>
<comment type="similarity">
    <text evidence="1">Belongs to the bacterial ribosomal protein bL33 family.</text>
</comment>
<comment type="sequence caution" evidence="2">
    <conflict type="erroneous initiation">
        <sequence resource="EMBL-CDS" id="ABJ61393"/>
    </conflict>
    <text>Extended N-terminus.</text>
</comment>
<keyword id="KW-1185">Reference proteome</keyword>
<keyword id="KW-0687">Ribonucleoprotein</keyword>
<keyword id="KW-0689">Ribosomal protein</keyword>
<sequence>MASHKVSLACTVCGSRNYTVTLSKDRTERLSVSKFCQHCGKHTLHQQTK</sequence>
<reference key="1">
    <citation type="journal article" date="2006" name="Proc. Natl. Acad. Sci. U.S.A.">
        <title>Comparative genomics of the lactic acid bacteria.</title>
        <authorList>
            <person name="Makarova K.S."/>
            <person name="Slesarev A."/>
            <person name="Wolf Y.I."/>
            <person name="Sorokin A."/>
            <person name="Mirkin B."/>
            <person name="Koonin E.V."/>
            <person name="Pavlov A."/>
            <person name="Pavlova N."/>
            <person name="Karamychev V."/>
            <person name="Polouchine N."/>
            <person name="Shakhova V."/>
            <person name="Grigoriev I."/>
            <person name="Lou Y."/>
            <person name="Rohksar D."/>
            <person name="Lucas S."/>
            <person name="Huang K."/>
            <person name="Goodstein D.M."/>
            <person name="Hawkins T."/>
            <person name="Plengvidhya V."/>
            <person name="Welker D."/>
            <person name="Hughes J."/>
            <person name="Goh Y."/>
            <person name="Benson A."/>
            <person name="Baldwin K."/>
            <person name="Lee J.-H."/>
            <person name="Diaz-Muniz I."/>
            <person name="Dosti B."/>
            <person name="Smeianov V."/>
            <person name="Wechter W."/>
            <person name="Barabote R."/>
            <person name="Lorca G."/>
            <person name="Altermann E."/>
            <person name="Barrangou R."/>
            <person name="Ganesan B."/>
            <person name="Xie Y."/>
            <person name="Rawsthorne H."/>
            <person name="Tamir D."/>
            <person name="Parker C."/>
            <person name="Breidt F."/>
            <person name="Broadbent J.R."/>
            <person name="Hutkins R."/>
            <person name="O'Sullivan D."/>
            <person name="Steele J."/>
            <person name="Unlu G."/>
            <person name="Saier M.H. Jr."/>
            <person name="Klaenhammer T."/>
            <person name="Richardson P."/>
            <person name="Kozyavkin S."/>
            <person name="Weimer B.C."/>
            <person name="Mills D.A."/>
        </authorList>
    </citation>
    <scope>NUCLEOTIDE SEQUENCE [LARGE SCALE GENOMIC DNA]</scope>
    <source>
        <strain>ATCC 8293 / DSM 20343 / BCRC 11652 / CCM 1803 / JCM 6124 / NCDO 523 / NBRC 100496 / NCIMB 8023 / NCTC 12954 / NRRL B-1118 / 37Y</strain>
    </source>
</reference>
<name>RL331_LEUMM</name>
<proteinExistence type="inferred from homology"/>
<dbReference type="EMBL" id="CP000414">
    <property type="protein sequence ID" value="ABJ61393.1"/>
    <property type="status" value="ALT_INIT"/>
    <property type="molecule type" value="Genomic_DNA"/>
</dbReference>
<dbReference type="SMR" id="Q03ZH9"/>
<dbReference type="EnsemblBacteria" id="ABJ61393">
    <property type="protein sequence ID" value="ABJ61393"/>
    <property type="gene ID" value="LEUM_0266"/>
</dbReference>
<dbReference type="KEGG" id="lme:LEUM_0266"/>
<dbReference type="eggNOG" id="COG0267">
    <property type="taxonomic scope" value="Bacteria"/>
</dbReference>
<dbReference type="HOGENOM" id="CLU_190949_0_1_9"/>
<dbReference type="Proteomes" id="UP000000362">
    <property type="component" value="Chromosome"/>
</dbReference>
<dbReference type="GO" id="GO:0005737">
    <property type="term" value="C:cytoplasm"/>
    <property type="evidence" value="ECO:0007669"/>
    <property type="project" value="UniProtKB-ARBA"/>
</dbReference>
<dbReference type="GO" id="GO:1990904">
    <property type="term" value="C:ribonucleoprotein complex"/>
    <property type="evidence" value="ECO:0007669"/>
    <property type="project" value="UniProtKB-KW"/>
</dbReference>
<dbReference type="GO" id="GO:0005840">
    <property type="term" value="C:ribosome"/>
    <property type="evidence" value="ECO:0007669"/>
    <property type="project" value="UniProtKB-KW"/>
</dbReference>
<dbReference type="GO" id="GO:0003735">
    <property type="term" value="F:structural constituent of ribosome"/>
    <property type="evidence" value="ECO:0007669"/>
    <property type="project" value="InterPro"/>
</dbReference>
<dbReference type="GO" id="GO:0006412">
    <property type="term" value="P:translation"/>
    <property type="evidence" value="ECO:0007669"/>
    <property type="project" value="UniProtKB-UniRule"/>
</dbReference>
<dbReference type="Gene3D" id="2.20.28.120">
    <property type="entry name" value="Ribosomal protein L33"/>
    <property type="match status" value="1"/>
</dbReference>
<dbReference type="HAMAP" id="MF_00294">
    <property type="entry name" value="Ribosomal_bL33"/>
    <property type="match status" value="1"/>
</dbReference>
<dbReference type="InterPro" id="IPR001705">
    <property type="entry name" value="Ribosomal_bL33"/>
</dbReference>
<dbReference type="InterPro" id="IPR038584">
    <property type="entry name" value="Ribosomal_bL33_sf"/>
</dbReference>
<dbReference type="InterPro" id="IPR011332">
    <property type="entry name" value="Ribosomal_zn-bd"/>
</dbReference>
<dbReference type="NCBIfam" id="NF001764">
    <property type="entry name" value="PRK00504.1"/>
    <property type="match status" value="1"/>
</dbReference>
<dbReference type="NCBIfam" id="TIGR01023">
    <property type="entry name" value="rpmG_bact"/>
    <property type="match status" value="1"/>
</dbReference>
<dbReference type="Pfam" id="PF00471">
    <property type="entry name" value="Ribosomal_L33"/>
    <property type="match status" value="1"/>
</dbReference>
<dbReference type="SUPFAM" id="SSF57829">
    <property type="entry name" value="Zn-binding ribosomal proteins"/>
    <property type="match status" value="1"/>
</dbReference>
<organism>
    <name type="scientific">Leuconostoc mesenteroides subsp. mesenteroides (strain ATCC 8293 / DSM 20343 / BCRC 11652 / CCM 1803 / JCM 6124 / NCDO 523 / NBRC 100496 / NCIMB 8023 / NCTC 12954 / NRRL B-1118 / 37Y)</name>
    <dbReference type="NCBI Taxonomy" id="203120"/>
    <lineage>
        <taxon>Bacteria</taxon>
        <taxon>Bacillati</taxon>
        <taxon>Bacillota</taxon>
        <taxon>Bacilli</taxon>
        <taxon>Lactobacillales</taxon>
        <taxon>Lactobacillaceae</taxon>
        <taxon>Leuconostoc</taxon>
    </lineage>
</organism>
<accession>Q03ZH9</accession>
<feature type="chain" id="PRO_0000356529" description="Large ribosomal subunit protein bL33A">
    <location>
        <begin position="1"/>
        <end position="49"/>
    </location>
</feature>
<protein>
    <recommendedName>
        <fullName evidence="1">Large ribosomal subunit protein bL33A</fullName>
    </recommendedName>
    <alternativeName>
        <fullName evidence="1">50S ribosomal protein L33 1</fullName>
    </alternativeName>
</protein>
<evidence type="ECO:0000255" key="1">
    <source>
        <dbReference type="HAMAP-Rule" id="MF_00294"/>
    </source>
</evidence>
<evidence type="ECO:0000305" key="2"/>